<evidence type="ECO:0000255" key="1">
    <source>
        <dbReference type="HAMAP-Rule" id="MF_01519"/>
    </source>
</evidence>
<proteinExistence type="inferred from homology"/>
<name>Y1965_ALIF1</name>
<accession>Q5E3D6</accession>
<sequence>MYPHLVSLGISEPEKIERYSLRQEAHKDILKIYFSKQKGELFAKSVKFKYPRQVKNVLVDSGSHRYKETTEINRNLTLIIDELNKITRPEKETPTDVKKKILKDLRHLEKVVASKIEEIEKDLEKL</sequence>
<reference key="1">
    <citation type="journal article" date="2005" name="Proc. Natl. Acad. Sci. U.S.A.">
        <title>Complete genome sequence of Vibrio fischeri: a symbiotic bacterium with pathogenic congeners.</title>
        <authorList>
            <person name="Ruby E.G."/>
            <person name="Urbanowski M."/>
            <person name="Campbell J."/>
            <person name="Dunn A."/>
            <person name="Faini M."/>
            <person name="Gunsalus R."/>
            <person name="Lostroh P."/>
            <person name="Lupp C."/>
            <person name="McCann J."/>
            <person name="Millikan D."/>
            <person name="Schaefer A."/>
            <person name="Stabb E."/>
            <person name="Stevens A."/>
            <person name="Visick K."/>
            <person name="Whistler C."/>
            <person name="Greenberg E.P."/>
        </authorList>
    </citation>
    <scope>NUCLEOTIDE SEQUENCE [LARGE SCALE GENOMIC DNA]</scope>
    <source>
        <strain>ATCC 700601 / ES114</strain>
    </source>
</reference>
<dbReference type="EMBL" id="CP000020">
    <property type="protein sequence ID" value="AAW86460.1"/>
    <property type="molecule type" value="Genomic_DNA"/>
</dbReference>
<dbReference type="RefSeq" id="WP_005420564.1">
    <property type="nucleotide sequence ID" value="NZ_CAWLES010000001.1"/>
</dbReference>
<dbReference type="RefSeq" id="YP_205348.1">
    <property type="nucleotide sequence ID" value="NC_006840.2"/>
</dbReference>
<dbReference type="SMR" id="Q5E3D6"/>
<dbReference type="STRING" id="312309.VF_1965"/>
<dbReference type="EnsemblBacteria" id="AAW86460">
    <property type="protein sequence ID" value="AAW86460"/>
    <property type="gene ID" value="VF_1965"/>
</dbReference>
<dbReference type="GeneID" id="54164661"/>
<dbReference type="KEGG" id="vfi:VF_1965"/>
<dbReference type="PATRIC" id="fig|312309.11.peg.1992"/>
<dbReference type="eggNOG" id="ENOG502ZBV4">
    <property type="taxonomic scope" value="Bacteria"/>
</dbReference>
<dbReference type="HOGENOM" id="CLU_136774_0_0_6"/>
<dbReference type="OrthoDB" id="5624524at2"/>
<dbReference type="Proteomes" id="UP000000537">
    <property type="component" value="Chromosome I"/>
</dbReference>
<dbReference type="HAMAP" id="MF_01519">
    <property type="entry name" value="UPF0325"/>
    <property type="match status" value="1"/>
</dbReference>
<dbReference type="InterPro" id="IPR020911">
    <property type="entry name" value="UPF0325"/>
</dbReference>
<dbReference type="NCBIfam" id="NF010213">
    <property type="entry name" value="PRK13677.1"/>
    <property type="match status" value="1"/>
</dbReference>
<dbReference type="Pfam" id="PF11944">
    <property type="entry name" value="DUF3461"/>
    <property type="match status" value="1"/>
</dbReference>
<comment type="similarity">
    <text evidence="1">Belongs to the UPF0325 family.</text>
</comment>
<keyword id="KW-1185">Reference proteome</keyword>
<organism>
    <name type="scientific">Aliivibrio fischeri (strain ATCC 700601 / ES114)</name>
    <name type="common">Vibrio fischeri</name>
    <dbReference type="NCBI Taxonomy" id="312309"/>
    <lineage>
        <taxon>Bacteria</taxon>
        <taxon>Pseudomonadati</taxon>
        <taxon>Pseudomonadota</taxon>
        <taxon>Gammaproteobacteria</taxon>
        <taxon>Vibrionales</taxon>
        <taxon>Vibrionaceae</taxon>
        <taxon>Aliivibrio</taxon>
    </lineage>
</organism>
<protein>
    <recommendedName>
        <fullName evidence="1">UPF0325 protein VF_1965</fullName>
    </recommendedName>
</protein>
<gene>
    <name type="ordered locus">VF_1965</name>
</gene>
<feature type="chain" id="PRO_0000211847" description="UPF0325 protein VF_1965">
    <location>
        <begin position="1"/>
        <end position="126"/>
    </location>
</feature>